<gene>
    <name type="primary">HAP1</name>
    <name type="synonym">HAP2</name>
    <name type="synonym">HLP1</name>
</gene>
<evidence type="ECO:0000250" key="1">
    <source>
        <dbReference type="UniProtKB" id="O35668"/>
    </source>
</evidence>
<evidence type="ECO:0000250" key="2">
    <source>
        <dbReference type="UniProtKB" id="P54256"/>
    </source>
</evidence>
<evidence type="ECO:0000255" key="3"/>
<evidence type="ECO:0000256" key="4">
    <source>
        <dbReference type="SAM" id="MobiDB-lite"/>
    </source>
</evidence>
<evidence type="ECO:0000269" key="5">
    <source>
    </source>
</evidence>
<evidence type="ECO:0000269" key="6">
    <source>
    </source>
</evidence>
<evidence type="ECO:0000269" key="7">
    <source>
    </source>
</evidence>
<evidence type="ECO:0000269" key="8">
    <source>
    </source>
</evidence>
<evidence type="ECO:0000269" key="9">
    <source>
    </source>
</evidence>
<evidence type="ECO:0000269" key="10">
    <source>
    </source>
</evidence>
<evidence type="ECO:0000269" key="11">
    <source>
    </source>
</evidence>
<evidence type="ECO:0000269" key="12">
    <source>
    </source>
</evidence>
<evidence type="ECO:0000269" key="13">
    <source>
    </source>
</evidence>
<evidence type="ECO:0000269" key="14">
    <source>
    </source>
</evidence>
<evidence type="ECO:0000269" key="15">
    <source>
    </source>
</evidence>
<evidence type="ECO:0000269" key="16">
    <source>
    </source>
</evidence>
<evidence type="ECO:0000269" key="17">
    <source ref="5"/>
</evidence>
<evidence type="ECO:0000269" key="18">
    <source ref="6"/>
</evidence>
<evidence type="ECO:0000303" key="19">
    <source>
    </source>
</evidence>
<evidence type="ECO:0000303" key="20">
    <source>
    </source>
</evidence>
<evidence type="ECO:0000303" key="21">
    <source>
    </source>
</evidence>
<evidence type="ECO:0000303" key="22">
    <source ref="5"/>
</evidence>
<evidence type="ECO:0000305" key="23"/>
<evidence type="ECO:0000305" key="24">
    <source>
    </source>
</evidence>
<protein>
    <recommendedName>
        <fullName>Huntingtin-associated protein 1</fullName>
        <shortName>HAP-1</shortName>
    </recommendedName>
    <alternativeName>
        <fullName>Neuroan 1</fullName>
    </alternativeName>
</protein>
<organism>
    <name type="scientific">Homo sapiens</name>
    <name type="common">Human</name>
    <dbReference type="NCBI Taxonomy" id="9606"/>
    <lineage>
        <taxon>Eukaryota</taxon>
        <taxon>Metazoa</taxon>
        <taxon>Chordata</taxon>
        <taxon>Craniata</taxon>
        <taxon>Vertebrata</taxon>
        <taxon>Euteleostomi</taxon>
        <taxon>Mammalia</taxon>
        <taxon>Eutheria</taxon>
        <taxon>Euarchontoglires</taxon>
        <taxon>Primates</taxon>
        <taxon>Haplorrhini</taxon>
        <taxon>Catarrhini</taxon>
        <taxon>Hominidae</taxon>
        <taxon>Homo</taxon>
    </lineage>
</organism>
<keyword id="KW-0025">Alternative splicing</keyword>
<keyword id="KW-0072">Autophagy</keyword>
<keyword id="KW-0966">Cell projection</keyword>
<keyword id="KW-0970">Cilium biogenesis/degradation</keyword>
<keyword id="KW-0175">Coiled coil</keyword>
<keyword id="KW-0963">Cytoplasm</keyword>
<keyword id="KW-0968">Cytoplasmic vesicle</keyword>
<keyword id="KW-0206">Cytoskeleton</keyword>
<keyword id="KW-0256">Endoplasmic reticulum</keyword>
<keyword id="KW-0967">Endosome</keyword>
<keyword id="KW-0268">Exocytosis</keyword>
<keyword id="KW-0458">Lysosome</keyword>
<keyword id="KW-0496">Mitochondrion</keyword>
<keyword id="KW-0539">Nucleus</keyword>
<keyword id="KW-0653">Protein transport</keyword>
<keyword id="KW-1267">Proteomics identification</keyword>
<keyword id="KW-1185">Reference proteome</keyword>
<keyword id="KW-0770">Synapse</keyword>
<keyword id="KW-0813">Transport</keyword>
<sequence length="671" mass="75506">MRPKRLGRCCAGSRLGPGDPAALTCAPSPSASPAPEPSAQPQARGTGQRVGSRATSGSQFLSEARTGARPASEAGAKAGARRPSAFSAIQGDVRSMPDNSDAPWTRFVFQGPFGSRATGRGTGKAAGIWKTPAAYVGRRPGVSGPERAAFIRELEEALCPNLPPPVKKITQEDVKVMLYLLEELLPPVWESVTYGMVLQRERDLNTAARIGQSLVKQNSVLMEENSKLEALLGSAKEEILYLRHQVNLRDELLQLYSDSDEEDEDEEEEEEEKEAEEEQEEEEAEEDLQCAHPCDAPKLISQEALLHQHHCPQLEALQEKLRLLEEENHQLREEASQLDTLEDEEQMLILECVEQFSEASQQMAELSEVLVLRLENYERQQQEVARLQAQVLKLQQRCRMYGAETEKLQKQLASEKEIQMQLQEESVWVGSQLQDLREKYMDCGGMLIEMQEEVKTLRQQPPVSTGSATHYPYSVPLETLPGFQETLAEELRTSLRRMISDPVYFMERNYEMPRGDTSSLRYDFRYSEDREQVRGFEAEEGLMLAADIMRGEDFTPAEEFVPQEELGAAKKVPAEEGVMEEAELVSEETEGWEEVELELDEATRMNVVTSALEASGLGPSHLDMNYVLQQLANWQDAHYRRQLRWKMLQKGECPHGALPAASRTSCRSSCR</sequence>
<name>HAP1_HUMAN</name>
<reference key="1">
    <citation type="journal article" date="1998" name="J. Biol. Chem.">
        <title>A human HAP1 homologue. Cloning, expression, and interaction with huntingtin.</title>
        <authorList>
            <person name="Li S.-H."/>
            <person name="Hosseini S.H."/>
            <person name="Gutekunst C.-A."/>
            <person name="Hersch S.M."/>
            <person name="Ferrante R.J."/>
            <person name="Li X.-J."/>
        </authorList>
    </citation>
    <scope>NUCLEOTIDE SEQUENCE [MRNA] (ISOFORM 2)</scope>
    <scope>VARIANTS ARG-4; THR-58 AND LEU-560</scope>
</reference>
<reference key="2">
    <citation type="journal article" date="2000" name="Gene">
        <title>Human huntingtin-associated protein (HAP-1) gene: genomic organisation and an intragenic polymorphism.</title>
        <authorList>
            <person name="Nasir J."/>
            <person name="Lafuente M.-J."/>
            <person name="Duan K."/>
            <person name="Colomer V."/>
            <person name="Engelender S."/>
            <person name="Ingersoll R."/>
            <person name="Margolis R.L."/>
            <person name="Ross C.A."/>
            <person name="Hayden M.R."/>
        </authorList>
    </citation>
    <scope>NUCLEOTIDE SEQUENCE [GENOMIC DNA] (ISOFORM 1)</scope>
    <scope>VARIANTS ARG-4; THR-58 AND LEU-560</scope>
</reference>
<reference key="3">
    <citation type="journal article" date="2004" name="Nat. Genet.">
        <title>Complete sequencing and characterization of 21,243 full-length human cDNAs.</title>
        <authorList>
            <person name="Ota T."/>
            <person name="Suzuki Y."/>
            <person name="Nishikawa T."/>
            <person name="Otsuki T."/>
            <person name="Sugiyama T."/>
            <person name="Irie R."/>
            <person name="Wakamatsu A."/>
            <person name="Hayashi K."/>
            <person name="Sato H."/>
            <person name="Nagai K."/>
            <person name="Kimura K."/>
            <person name="Makita H."/>
            <person name="Sekine M."/>
            <person name="Obayashi M."/>
            <person name="Nishi T."/>
            <person name="Shibahara T."/>
            <person name="Tanaka T."/>
            <person name="Ishii S."/>
            <person name="Yamamoto J."/>
            <person name="Saito K."/>
            <person name="Kawai Y."/>
            <person name="Isono Y."/>
            <person name="Nakamura Y."/>
            <person name="Nagahari K."/>
            <person name="Murakami K."/>
            <person name="Yasuda T."/>
            <person name="Iwayanagi T."/>
            <person name="Wagatsuma M."/>
            <person name="Shiratori A."/>
            <person name="Sudo H."/>
            <person name="Hosoiri T."/>
            <person name="Kaku Y."/>
            <person name="Kodaira H."/>
            <person name="Kondo H."/>
            <person name="Sugawara M."/>
            <person name="Takahashi M."/>
            <person name="Kanda K."/>
            <person name="Yokoi T."/>
            <person name="Furuya T."/>
            <person name="Kikkawa E."/>
            <person name="Omura Y."/>
            <person name="Abe K."/>
            <person name="Kamihara K."/>
            <person name="Katsuta N."/>
            <person name="Sato K."/>
            <person name="Tanikawa M."/>
            <person name="Yamazaki M."/>
            <person name="Ninomiya K."/>
            <person name="Ishibashi T."/>
            <person name="Yamashita H."/>
            <person name="Murakawa K."/>
            <person name="Fujimori K."/>
            <person name="Tanai H."/>
            <person name="Kimata M."/>
            <person name="Watanabe M."/>
            <person name="Hiraoka S."/>
            <person name="Chiba Y."/>
            <person name="Ishida S."/>
            <person name="Ono Y."/>
            <person name="Takiguchi S."/>
            <person name="Watanabe S."/>
            <person name="Yosida M."/>
            <person name="Hotuta T."/>
            <person name="Kusano J."/>
            <person name="Kanehori K."/>
            <person name="Takahashi-Fujii A."/>
            <person name="Hara H."/>
            <person name="Tanase T.-O."/>
            <person name="Nomura Y."/>
            <person name="Togiya S."/>
            <person name="Komai F."/>
            <person name="Hara R."/>
            <person name="Takeuchi K."/>
            <person name="Arita M."/>
            <person name="Imose N."/>
            <person name="Musashino K."/>
            <person name="Yuuki H."/>
            <person name="Oshima A."/>
            <person name="Sasaki N."/>
            <person name="Aotsuka S."/>
            <person name="Yoshikawa Y."/>
            <person name="Matsunawa H."/>
            <person name="Ichihara T."/>
            <person name="Shiohata N."/>
            <person name="Sano S."/>
            <person name="Moriya S."/>
            <person name="Momiyama H."/>
            <person name="Satoh N."/>
            <person name="Takami S."/>
            <person name="Terashima Y."/>
            <person name="Suzuki O."/>
            <person name="Nakagawa S."/>
            <person name="Senoh A."/>
            <person name="Mizoguchi H."/>
            <person name="Goto Y."/>
            <person name="Shimizu F."/>
            <person name="Wakebe H."/>
            <person name="Hishigaki H."/>
            <person name="Watanabe T."/>
            <person name="Sugiyama A."/>
            <person name="Takemoto M."/>
            <person name="Kawakami B."/>
            <person name="Yamazaki M."/>
            <person name="Watanabe K."/>
            <person name="Kumagai A."/>
            <person name="Itakura S."/>
            <person name="Fukuzumi Y."/>
            <person name="Fujimori Y."/>
            <person name="Komiyama M."/>
            <person name="Tashiro H."/>
            <person name="Tanigami A."/>
            <person name="Fujiwara T."/>
            <person name="Ono T."/>
            <person name="Yamada K."/>
            <person name="Fujii Y."/>
            <person name="Ozaki K."/>
            <person name="Hirao M."/>
            <person name="Ohmori Y."/>
            <person name="Kawabata A."/>
            <person name="Hikiji T."/>
            <person name="Kobatake N."/>
            <person name="Inagaki H."/>
            <person name="Ikema Y."/>
            <person name="Okamoto S."/>
            <person name="Okitani R."/>
            <person name="Kawakami T."/>
            <person name="Noguchi S."/>
            <person name="Itoh T."/>
            <person name="Shigeta K."/>
            <person name="Senba T."/>
            <person name="Matsumura K."/>
            <person name="Nakajima Y."/>
            <person name="Mizuno T."/>
            <person name="Morinaga M."/>
            <person name="Sasaki M."/>
            <person name="Togashi T."/>
            <person name="Oyama M."/>
            <person name="Hata H."/>
            <person name="Watanabe M."/>
            <person name="Komatsu T."/>
            <person name="Mizushima-Sugano J."/>
            <person name="Satoh T."/>
            <person name="Shirai Y."/>
            <person name="Takahashi Y."/>
            <person name="Nakagawa K."/>
            <person name="Okumura K."/>
            <person name="Nagase T."/>
            <person name="Nomura N."/>
            <person name="Kikuchi H."/>
            <person name="Masuho Y."/>
            <person name="Yamashita R."/>
            <person name="Nakai K."/>
            <person name="Yada T."/>
            <person name="Nakamura Y."/>
            <person name="Ohara O."/>
            <person name="Isogai T."/>
            <person name="Sugano S."/>
        </authorList>
    </citation>
    <scope>NUCLEOTIDE SEQUENCE [LARGE SCALE MRNA] (ISOFORMS 3 AND 4)</scope>
    <scope>VARIANTS LEU-357; MET-493 AND LEU-560</scope>
    <source>
        <tissue>Embryo</tissue>
    </source>
</reference>
<reference key="4">
    <citation type="journal article" date="2006" name="Nature">
        <title>DNA sequence of human chromosome 17 and analysis of rearrangement in the human lineage.</title>
        <authorList>
            <person name="Zody M.C."/>
            <person name="Garber M."/>
            <person name="Adams D.J."/>
            <person name="Sharpe T."/>
            <person name="Harrow J."/>
            <person name="Lupski J.R."/>
            <person name="Nicholson C."/>
            <person name="Searle S.M."/>
            <person name="Wilming L."/>
            <person name="Young S.K."/>
            <person name="Abouelleil A."/>
            <person name="Allen N.R."/>
            <person name="Bi W."/>
            <person name="Bloom T."/>
            <person name="Borowsky M.L."/>
            <person name="Bugalter B.E."/>
            <person name="Butler J."/>
            <person name="Chang J.L."/>
            <person name="Chen C.-K."/>
            <person name="Cook A."/>
            <person name="Corum B."/>
            <person name="Cuomo C.A."/>
            <person name="de Jong P.J."/>
            <person name="DeCaprio D."/>
            <person name="Dewar K."/>
            <person name="FitzGerald M."/>
            <person name="Gilbert J."/>
            <person name="Gibson R."/>
            <person name="Gnerre S."/>
            <person name="Goldstein S."/>
            <person name="Grafham D.V."/>
            <person name="Grocock R."/>
            <person name="Hafez N."/>
            <person name="Hagopian D.S."/>
            <person name="Hart E."/>
            <person name="Norman C.H."/>
            <person name="Humphray S."/>
            <person name="Jaffe D.B."/>
            <person name="Jones M."/>
            <person name="Kamal M."/>
            <person name="Khodiyar V.K."/>
            <person name="LaButti K."/>
            <person name="Laird G."/>
            <person name="Lehoczky J."/>
            <person name="Liu X."/>
            <person name="Lokyitsang T."/>
            <person name="Loveland J."/>
            <person name="Lui A."/>
            <person name="Macdonald P."/>
            <person name="Major J.E."/>
            <person name="Matthews L."/>
            <person name="Mauceli E."/>
            <person name="McCarroll S.A."/>
            <person name="Mihalev A.H."/>
            <person name="Mudge J."/>
            <person name="Nguyen C."/>
            <person name="Nicol R."/>
            <person name="O'Leary S.B."/>
            <person name="Osoegawa K."/>
            <person name="Schwartz D.C."/>
            <person name="Shaw-Smith C."/>
            <person name="Stankiewicz P."/>
            <person name="Steward C."/>
            <person name="Swarbreck D."/>
            <person name="Venkataraman V."/>
            <person name="Whittaker C.A."/>
            <person name="Yang X."/>
            <person name="Zimmer A.R."/>
            <person name="Bradley A."/>
            <person name="Hubbard T."/>
            <person name="Birren B.W."/>
            <person name="Rogers J."/>
            <person name="Lander E.S."/>
            <person name="Nusbaum C."/>
        </authorList>
    </citation>
    <scope>NUCLEOTIDE SEQUENCE [LARGE SCALE GENOMIC DNA]</scope>
</reference>
<reference key="5">
    <citation type="submission" date="2005-03" db="EMBL/GenBank/DDBJ databases">
        <authorList>
            <person name="Totoki Y."/>
            <person name="Toyoda A."/>
            <person name="Takeda T."/>
            <person name="Sakaki Y."/>
            <person name="Tanaka A."/>
            <person name="Yokoyama S."/>
            <person name="Ohara O."/>
            <person name="Nagase T."/>
            <person name="Kikuno R.F."/>
        </authorList>
    </citation>
    <scope>NUCLEOTIDE SEQUENCE [LARGE SCALE MRNA] OF 2-671 (ISOFORM 3)</scope>
    <scope>VARIANTS ARG-4; THR-58 AND LEU-560</scope>
    <source>
        <tissue>Brain</tissue>
    </source>
</reference>
<reference key="6">
    <citation type="submission" date="1998-03" db="EMBL/GenBank/DDBJ databases">
        <authorList>
            <person name="Nasir J."/>
            <person name="Duan K."/>
            <person name="Nichol K."/>
            <person name="Engelender S."/>
            <person name="Ashworth R."/>
            <person name="Colomer V."/>
            <person name="Thomas S."/>
            <person name="Disteche C."/>
            <person name="Hayden M.R."/>
            <person name="Ross C.A."/>
        </authorList>
    </citation>
    <scope>NUCLEOTIDE SEQUENCE [GENOMIC DNA] OF 96-671 (ISOFORM 1)</scope>
    <scope>VARIANTS LEU-357 AND LEU-560</scope>
</reference>
<reference key="7">
    <citation type="journal article" date="1995" name="Nature">
        <title>A huntingtin-associated protein enriched in brain with implications for pathology.</title>
        <authorList>
            <person name="Li X.-J."/>
            <person name="Li S.-H."/>
            <person name="Sharp A.H."/>
            <person name="Nucifora F.C. Jr."/>
            <person name="Schilling G."/>
            <person name="Lanahan A."/>
            <person name="Worley P."/>
            <person name="Snyder S.H."/>
            <person name="Ross C.A."/>
        </authorList>
    </citation>
    <scope>NUCLEOTIDE SEQUENCE [MRNA] OF 255-626 (ISOFORM 2)</scope>
    <scope>VARIANT LEU-560</scope>
    <source>
        <tissue>Caudate nucleus</tissue>
    </source>
</reference>
<reference key="8">
    <citation type="journal article" date="1998" name="J. Neurosci.">
        <title>The cellular and subcellular localization of huntingtin-associated protein 1 (HAP1): comparison with huntingtin in rat and human.</title>
        <authorList>
            <person name="Gutekunst C.A."/>
            <person name="Li S.H."/>
            <person name="Yi H."/>
            <person name="Ferrante R.J."/>
            <person name="Li X.J."/>
            <person name="Hersch S.M."/>
        </authorList>
    </citation>
    <scope>SUBCELLULAR LOCATION</scope>
</reference>
<reference key="9">
    <citation type="journal article" date="2008" name="J. Biol. Chem.">
        <title>Huntingtin regulates RE1-silencing transcription factor/neuron-restrictive silencer factor (REST/NRSF) nuclear trafficking indirectly through a complex with REST/NRSF-interacting LIM domain protein (RILP) and dynactin p150 Glued.</title>
        <authorList>
            <person name="Shimojo M."/>
        </authorList>
    </citation>
    <scope>FUNCTION</scope>
</reference>
<reference key="10">
    <citation type="journal article" date="2010" name="J. Biol. Chem.">
        <title>Huntingtin-associated protein-1 interacts with pro-brain-derived neurotrophic factor and mediates its transport and release.</title>
        <authorList>
            <person name="Wu L.L."/>
            <person name="Fan Y."/>
            <person name="Li S."/>
            <person name="Li X.J."/>
            <person name="Zhou X.F."/>
        </authorList>
    </citation>
    <scope>INTERACTION WITH BDNF</scope>
</reference>
<reference key="11">
    <citation type="journal article" date="2011" name="NeuroReport">
        <title>Interaction of ataxin-3 with huntingtin-associated protein 1 through Josephin domain.</title>
        <authorList>
            <person name="Takeshita Y."/>
            <person name="Fujinaga R."/>
            <person name="Kokubu K."/>
            <person name="Islam M.N."/>
            <person name="Jahan M.R."/>
            <person name="Yanai A."/>
            <person name="Kakizuka A."/>
            <person name="Shinoda K."/>
        </authorList>
    </citation>
    <scope>INTERACTION WITH ATXN3</scope>
</reference>
<reference key="12">
    <citation type="journal article" date="2012" name="J. Neurochem.">
        <title>Huntingtin associated protein 1 regulates trafficking of the amyloid precursor protein and modulates amyloid beta levels in neurons.</title>
        <authorList>
            <person name="Yang G.Z."/>
            <person name="Yang M."/>
            <person name="Lim Y."/>
            <person name="Lu J.J."/>
            <person name="Wang T.H."/>
            <person name="Qi J.G."/>
            <person name="Zhong J.H."/>
            <person name="Zhou X.F."/>
        </authorList>
    </citation>
    <scope>INTERACTION WITH APP</scope>
</reference>
<reference key="13">
    <citation type="journal article" date="2013" name="J. Biol. Chem.">
        <title>The Joubert syndrome-associated missense mutation (V443D) in the Abelson-helper integration site 1 (AHI1) protein alters its localization and protein-protein interactions.</title>
        <authorList>
            <person name="Tuz K."/>
            <person name="Hsiao Y.C."/>
            <person name="Juarez O."/>
            <person name="Shi B."/>
            <person name="Harmon E.Y."/>
            <person name="Phelps I.G."/>
            <person name="Lennartz M.R."/>
            <person name="Glass I.A."/>
            <person name="Doherty D."/>
            <person name="Ferland R.J."/>
        </authorList>
    </citation>
    <scope>INTERACTION WITH AHI1</scope>
</reference>
<reference key="14">
    <citation type="journal article" date="2014" name="J. Cell Sci.">
        <title>Proteomic analysis of mammalian sperm cells identifies new components of the centrosome.</title>
        <authorList>
            <person name="Firat-Karalar E.N."/>
            <person name="Sante J."/>
            <person name="Elliott S."/>
            <person name="Stearns T."/>
        </authorList>
    </citation>
    <scope>INTERACTION WITH CFAP263</scope>
</reference>
<reference key="15">
    <citation type="journal article" date="2008" name="Hum. Mol. Genet.">
        <title>Huntingtin-associated protein-1 is a modifier of the age-at-onset of Huntington's disease.</title>
        <authorList>
            <person name="Metzger S."/>
            <person name="Rong J."/>
            <person name="Nguyen H.-P."/>
            <person name="Cape A."/>
            <person name="Tomiuk J."/>
            <person name="Soehn A.S."/>
            <person name="Propping P."/>
            <person name="Freudenberg-Hua Y."/>
            <person name="Freudenberg J."/>
            <person name="Tong L."/>
            <person name="Li S.-H."/>
            <person name="Li X.-J."/>
            <person name="Riess O."/>
        </authorList>
    </citation>
    <scope>VARIANTS LEU-357; TRP-437 AND MET-493</scope>
    <scope>CHARACTERIZATION OF VARIANT MET-493</scope>
</reference>
<feature type="chain" id="PRO_0000083894" description="Huntingtin-associated protein 1">
    <location>
        <begin position="1"/>
        <end position="671"/>
    </location>
</feature>
<feature type="domain" description="HAP1 N-terminal">
    <location>
        <begin position="106"/>
        <end position="461"/>
    </location>
</feature>
<feature type="region of interest" description="Disordered" evidence="4">
    <location>
        <begin position="1"/>
        <end position="83"/>
    </location>
</feature>
<feature type="region of interest" description="Disordered" evidence="4">
    <location>
        <begin position="258"/>
        <end position="289"/>
    </location>
</feature>
<feature type="coiled-coil region" evidence="3">
    <location>
        <begin position="212"/>
        <end position="427"/>
    </location>
</feature>
<feature type="compositionally biased region" description="Low complexity" evidence="4">
    <location>
        <begin position="20"/>
        <end position="29"/>
    </location>
</feature>
<feature type="compositionally biased region" description="Acidic residues" evidence="4">
    <location>
        <begin position="258"/>
        <end position="288"/>
    </location>
</feature>
<feature type="splice variant" id="VSP_038754" description="In isoform 4." evidence="19">
    <original>E</original>
    <variation>EVCTAFLIQ</variation>
    <location>
        <position position="183"/>
    </location>
</feature>
<feature type="splice variant" id="VSP_004277" description="In isoform 3 and isoform 4." evidence="19 22">
    <location>
        <begin position="401"/>
        <end position="477"/>
    </location>
</feature>
<feature type="splice variant" id="VSP_004278" description="In isoform 2." evidence="20 21">
    <location>
        <begin position="426"/>
        <end position="477"/>
    </location>
</feature>
<feature type="sequence variant" id="VAR_046736" description="In dbSNP:rs4796604." evidence="5 15 17">
    <original>K</original>
    <variation>R</variation>
    <location>
        <position position="4"/>
    </location>
</feature>
<feature type="sequence variant" id="VAR_046737" description="In dbSNP:rs4796603." evidence="5 15 17">
    <original>S</original>
    <variation>T</variation>
    <location>
        <position position="58"/>
    </location>
</feature>
<feature type="sequence variant" id="VAR_046738" description="In dbSNP:rs4796693." evidence="6 7 18">
    <original>S</original>
    <variation>L</variation>
    <location>
        <position position="357"/>
    </location>
</feature>
<feature type="sequence variant" id="VAR_056906" description="In dbSNP:rs35612698.">
    <original>L</original>
    <variation>F</variation>
    <location>
        <position position="408"/>
    </location>
</feature>
<feature type="sequence variant" id="VAR_046739" description="In dbSNP:rs11867808." evidence="7">
    <original>R</original>
    <variation>W</variation>
    <location>
        <position position="437"/>
    </location>
</feature>
<feature type="sequence variant" id="VAR_046741" description="In dbSNP:rs8075017.">
    <original>F</original>
    <variation>L</variation>
    <location>
        <position position="483"/>
    </location>
</feature>
<feature type="sequence variant" id="VAR_046742" description="In dbSNP:rs34853043.">
    <original>A</original>
    <variation>V</variation>
    <location>
        <position position="488"/>
    </location>
</feature>
<feature type="sequence variant" id="VAR_056907" description="May influence the age-at-onset of Huntington disease; increases binding to mutated HTT; influences HTT degradation; dbSNP:rs4523977." evidence="6 7">
    <original>T</original>
    <variation>M</variation>
    <location>
        <position position="493"/>
    </location>
</feature>
<feature type="sequence variant" id="VAR_056908" description="In dbSNP:rs34853043.">
    <original>A</original>
    <variation>V</variation>
    <location>
        <position position="557"/>
    </location>
</feature>
<feature type="sequence variant" id="VAR_062817" description="In dbSNP:rs8075017." evidence="5 6 14 15 17 18">
    <original>F</original>
    <variation>L</variation>
    <location>
        <position position="560"/>
    </location>
</feature>
<feature type="sequence variant" id="VAR_056909" description="In dbSNP:rs34044330.">
    <original>G</original>
    <variation>R</variation>
    <location>
        <position position="656"/>
    </location>
</feature>
<feature type="sequence conflict" description="In Ref. 6; CAB82785." evidence="23" ref="6">
    <location>
        <begin position="184"/>
        <end position="199"/>
    </location>
</feature>
<feature type="sequence conflict" description="In Ref. 3; BAB13952." evidence="23" ref="3">
    <original>P</original>
    <variation>L</variation>
    <location>
        <position position="573"/>
    </location>
</feature>
<feature type="sequence conflict" description="In Ref. 1; AAC39861." evidence="23" ref="1">
    <original>M</original>
    <variation>V</variation>
    <location>
        <position position="579"/>
    </location>
</feature>
<feature type="sequence conflict" description="In Ref. 7; AAC50297." evidence="23" ref="7">
    <original>A</original>
    <variation>T</variation>
    <location>
        <position position="611"/>
    </location>
</feature>
<accession>P54257</accession>
<accession>A8MQB5</accession>
<accession>O75358</accession>
<accession>Q59GK4</accession>
<accession>Q9H4G3</accession>
<accession>Q9HA98</accession>
<accession>Q9NY90</accession>
<proteinExistence type="evidence at protein level"/>
<comment type="function">
    <text evidence="8">Originally identified as neuronal protein that specifically associates with HTT/huntingtin and the binding is enhanced by an expanded polyglutamine repeat within HTT possibly affecting HAP1 interaction properties. Both HTT and HAP1 are involved in intracellular trafficking and HAP1 is proposed to link HTT to motor proteins and/or transport cargos. Seems to play a role in vesicular transport within neurons and axons such as from early endosomes to late endocytic compartments and to promote neurite outgrowth. The vesicular transport function via association with microtubule-dependent transporters can be attenuated by association with mutant HTT. Involved in the axonal transport of BDNF and its activity-dependent secretion; the function seems to involve HTT, DCTN1 and a complex with SORT1. Involved in APP trafficking and seems to facilitate APP anterograde transport and membrane insertion thereby possibly reducing processing into amyloid beta. Involved in delivery of gamma-aminobutyric acid (GABA(A)) receptors to synapses; the function is dependent on kinesin motor protein KIF5 and is disrupted by HTT with expanded polyglutamine repeat. Involved in regulation of autophagosome motility by promoting efficient retrograde axonal transport. Seems to be involved in regulation of membrane receptor recycling and degradation, and respective signal transduction, including GABA(A) receptors, tyrosine kinase receptors, EGFR, IP3 receptor and androgen receptor. Among others suggested to be involved in control of feeding behavior (involving hypothalamic GABA(A) receptors), cerebellar and brainstem development (involving AHI1 and NTRK1/TrkA), postnatal neurogenesis (involving hypothalamic NTRK2/TrkB), and ITPR1/InsP3R1-mediated Ca(2+) release (involving HTT and possibly the effect of mutant HTT). Via association with DCTN1/dynactin p150-glued and HTT/huntingtin involved in cytoplasmic retention of REST in neurons. May be involved in ciliogenesis. Involved in regulation of exocytosis. Seems to be involved in formation of cytoplasmic inclusion bodies (STBs). In case of anomalous expression of TBP, can sequester a subset of TBP into STBs; sequestration is enhanced by an expanded polyglutamine repeat within TBP. HAP1-containing STBs have been proposed to play a protective role against neurodegeneration in Huntigton disease (HD) and spinocerebellar ataxia 17 (SCA17).</text>
</comment>
<comment type="subunit">
    <text evidence="9 10 11 12 13">Self-associates. Interacts with HTT/huntingtin; enhanced by an expanded polyglutamine repeat within HTT. Interacts with DCTN1; decreased in presence of HTT with expanded polyglutamine repeat. Interacts with KLC2. Interacts with ITPR1 and APP. Interacts with AR; decreased by an expanded polyglutamine repeat within AR. Interacts with YWHAZ. Interacts with BDNF and SORT1; probably forming a complex involved in proBDNF trafficking, degradation and processing. Interacts with TBP, AHI1, HGS and KALRN. Interacts with KIF5A, KIF5B, KIF5C and GABRB3; indicative for an HAP1:KIF5 complex transporting a GABA(A) receptor as cargo. Interacts with ATXN3; in STBs with ATXN3 poly-Gln region with 27 repeats (normal population) and 79 repeats (spinocerebellar ataxia 3 (SCA3) patients) associating in the same strength. Interacts with NTRK2; HAP1 stabilizes association of NTRK2 with SORT1 preventing NTRK2 degradation. Interacts with CFAP263.</text>
</comment>
<comment type="interaction">
    <interactant intactId="EBI-712814">
        <id>P54257</id>
    </interactant>
    <interactant intactId="EBI-12119298">
        <id>Q8WTP8-2</id>
        <label>AEN</label>
    </interactant>
    <organismsDiffer>false</organismsDiffer>
    <experiments>3</experiments>
</comment>
<comment type="interaction">
    <interactant intactId="EBI-712814">
        <id>P54257</id>
    </interactant>
    <interactant intactId="EBI-1049056">
        <id>Q8N157</id>
        <label>AHI1</label>
    </interactant>
    <organismsDiffer>false</organismsDiffer>
    <experiments>3</experiments>
</comment>
<comment type="interaction">
    <interactant intactId="EBI-712814">
        <id>P54257</id>
    </interactant>
    <interactant intactId="EBI-946068">
        <id>P54252-1</id>
        <label>ATXN3</label>
    </interactant>
    <organismsDiffer>false</organismsDiffer>
    <experiments>6</experiments>
</comment>
<comment type="interaction">
    <interactant intactId="EBI-712814">
        <id>P54257</id>
    </interactant>
    <interactant intactId="EBI-747505">
        <id>Q8TAB5</id>
        <label>C1orf216</label>
    </interactant>
    <organismsDiffer>false</organismsDiffer>
    <experiments>3</experiments>
</comment>
<comment type="interaction">
    <interactant intactId="EBI-712814">
        <id>P54257</id>
    </interactant>
    <interactant intactId="EBI-739879">
        <id>Q53TS8</id>
        <label>C2CD6</label>
    </interactant>
    <organismsDiffer>false</organismsDiffer>
    <experiments>3</experiments>
</comment>
<comment type="interaction">
    <interactant intactId="EBI-712814">
        <id>P54257</id>
    </interactant>
    <interactant intactId="EBI-10961312">
        <id>Q8IYE1</id>
        <label>CCDC13</label>
    </interactant>
    <organismsDiffer>false</organismsDiffer>
    <experiments>3</experiments>
</comment>
<comment type="interaction">
    <interactant intactId="EBI-712814">
        <id>P54257</id>
    </interactant>
    <interactant intactId="EBI-746238">
        <id>Q07002</id>
        <label>CDK18</label>
    </interactant>
    <organismsDiffer>false</organismsDiffer>
    <experiments>3</experiments>
</comment>
<comment type="interaction">
    <interactant intactId="EBI-712814">
        <id>P54257</id>
    </interactant>
    <interactant intactId="EBI-742802">
        <id>Q9Y247</id>
        <label>FAM50B</label>
    </interactant>
    <organismsDiffer>false</organismsDiffer>
    <experiments>3</experiments>
</comment>
<comment type="interaction">
    <interactant intactId="EBI-712814">
        <id>P54257</id>
    </interactant>
    <interactant intactId="EBI-720116">
        <id>P60520</id>
        <label>GABARAPL2</label>
    </interactant>
    <organismsDiffer>false</organismsDiffer>
    <experiments>3</experiments>
</comment>
<comment type="interaction">
    <interactant intactId="EBI-712814">
        <id>P54257</id>
    </interactant>
    <interactant intactId="EBI-11953488">
        <id>P56524-2</id>
        <label>HDAC4</label>
    </interactant>
    <organismsDiffer>false</organismsDiffer>
    <experiments>3</experiments>
</comment>
<comment type="interaction">
    <interactant intactId="EBI-712814">
        <id>P54257</id>
    </interactant>
    <interactant intactId="EBI-740220">
        <id>O14964</id>
        <label>HGS</label>
    </interactant>
    <organismsDiffer>false</organismsDiffer>
    <experiments>3</experiments>
</comment>
<comment type="interaction">
    <interactant intactId="EBI-712814">
        <id>P54257</id>
    </interactant>
    <interactant intactId="EBI-3893317">
        <id>P09067</id>
        <label>HOXB5</label>
    </interactant>
    <organismsDiffer>false</organismsDiffer>
    <experiments>3</experiments>
</comment>
<comment type="interaction">
    <interactant intactId="EBI-712814">
        <id>P54257</id>
    </interactant>
    <interactant intactId="EBI-11991020">
        <id>A6NI15</id>
        <label>MSGN1</label>
    </interactant>
    <organismsDiffer>false</organismsDiffer>
    <experiments>3</experiments>
</comment>
<comment type="interaction">
    <interactant intactId="EBI-712814">
        <id>P54257</id>
    </interactant>
    <interactant intactId="EBI-602382">
        <id>Q16512</id>
        <label>PKN1</label>
    </interactant>
    <organismsDiffer>false</organismsDiffer>
    <experiments>3</experiments>
</comment>
<comment type="interaction">
    <interactant intactId="EBI-712814">
        <id>P54257</id>
    </interactant>
    <interactant intactId="EBI-2557469">
        <id>Q6NYC8</id>
        <label>PPP1R18</label>
    </interactant>
    <organismsDiffer>false</organismsDiffer>
    <experiments>3</experiments>
</comment>
<comment type="interaction">
    <interactant intactId="EBI-712814">
        <id>P54257</id>
    </interactant>
    <interactant intactId="EBI-1567797">
        <id>Q8WWY3</id>
        <label>PRPF31</label>
    </interactant>
    <organismsDiffer>false</organismsDiffer>
    <experiments>3</experiments>
</comment>
<comment type="interaction">
    <interactant intactId="EBI-712814">
        <id>P54257</id>
    </interactant>
    <interactant intactId="EBI-746325">
        <id>Q8TCX5</id>
        <label>RHPN1</label>
    </interactant>
    <organismsDiffer>false</organismsDiffer>
    <experiments>3</experiments>
</comment>
<comment type="interaction">
    <interactant intactId="EBI-712814">
        <id>P54257</id>
    </interactant>
    <interactant intactId="EBI-748391">
        <id>Q9BWG6</id>
        <label>SCNM1</label>
    </interactant>
    <organismsDiffer>false</organismsDiffer>
    <experiments>3</experiments>
</comment>
<comment type="interaction">
    <interactant intactId="EBI-712814">
        <id>P54257</id>
    </interactant>
    <interactant intactId="EBI-2555749">
        <id>Q6P2D0</id>
        <label>ZFP1</label>
    </interactant>
    <organismsDiffer>false</organismsDiffer>
    <experiments>3</experiments>
</comment>
<comment type="interaction">
    <interactant intactId="EBI-712814">
        <id>P54257</id>
    </interactant>
    <interactant intactId="EBI-2682299">
        <id>Q96NC0</id>
        <label>ZMAT2</label>
    </interactant>
    <organismsDiffer>false</organismsDiffer>
    <experiments>3</experiments>
</comment>
<comment type="interaction">
    <interactant intactId="EBI-712814">
        <id>P54257</id>
    </interactant>
    <interactant intactId="EBI-2555767">
        <id>Q15973</id>
        <label>ZNF124</label>
    </interactant>
    <organismsDiffer>false</organismsDiffer>
    <experiments>3</experiments>
</comment>
<comment type="interaction">
    <interactant intactId="EBI-712814">
        <id>P54257</id>
    </interactant>
    <interactant intactId="EBI-1105370">
        <id>Q9ULM2</id>
        <label>ZNF490</label>
    </interactant>
    <organismsDiffer>false</organismsDiffer>
    <experiments>3</experiments>
</comment>
<comment type="interaction">
    <interactant intactId="EBI-712814">
        <id>P54257</id>
    </interactant>
    <interactant intactId="EBI-10172590">
        <id>Q7Z3I7</id>
        <label>ZNF572</label>
    </interactant>
    <organismsDiffer>false</organismsDiffer>
    <experiments>3</experiments>
</comment>
<comment type="interaction">
    <interactant intactId="EBI-712814">
        <id>P54257</id>
    </interactant>
    <interactant intactId="EBI-14069183">
        <id>Q86XF7</id>
        <label>ZNF575</label>
    </interactant>
    <organismsDiffer>false</organismsDiffer>
    <experiments>5</experiments>
</comment>
<comment type="interaction">
    <interactant intactId="EBI-712814">
        <id>P54257</id>
    </interactant>
    <interactant intactId="EBI-11985915">
        <id>Q5T619</id>
        <label>ZNF648</label>
    </interactant>
    <organismsDiffer>false</organismsDiffer>
    <experiments>3</experiments>
</comment>
<comment type="interaction">
    <interactant intactId="EBI-712814">
        <id>P54257</id>
    </interactant>
    <interactant intactId="EBI-5667516">
        <id>Q9Y2P0</id>
        <label>ZNF835</label>
    </interactant>
    <organismsDiffer>false</organismsDiffer>
    <experiments>3</experiments>
</comment>
<comment type="interaction">
    <interactant intactId="EBI-9392340">
        <id>P54257-2</id>
    </interactant>
    <interactant intactId="EBI-466029">
        <id>P42858</id>
        <label>HTT</label>
    </interactant>
    <organismsDiffer>false</organismsDiffer>
    <experiments>8</experiments>
</comment>
<comment type="subcellular location">
    <subcellularLocation>
        <location evidence="16">Cytoplasm</location>
    </subcellularLocation>
    <subcellularLocation>
        <location evidence="16">Cell projection</location>
        <location evidence="16">Axon</location>
    </subcellularLocation>
    <subcellularLocation>
        <location evidence="2">Presynapse</location>
    </subcellularLocation>
    <subcellularLocation>
        <location evidence="2">Cytoplasm</location>
        <location evidence="2">Cytoskeleton</location>
    </subcellularLocation>
    <subcellularLocation>
        <location evidence="2">Cell projection</location>
        <location evidence="2">Dendritic spine</location>
    </subcellularLocation>
    <subcellularLocation>
        <location evidence="2">Cell projection</location>
        <location evidence="2">Dendrite</location>
    </subcellularLocation>
    <subcellularLocation>
        <location evidence="2">Lysosome</location>
    </subcellularLocation>
    <subcellularLocation>
        <location evidence="2">Endoplasmic reticulum</location>
    </subcellularLocation>
    <subcellularLocation>
        <location evidence="24">Mitochondrion</location>
    </subcellularLocation>
    <subcellularLocation>
        <location evidence="2">Nucleus</location>
    </subcellularLocation>
    <subcellularLocation>
        <location evidence="1">Cytoplasmic vesicle</location>
        <location evidence="1">Autophagosome</location>
    </subcellularLocation>
    <subcellularLocation>
        <location evidence="2">Early endosome</location>
    </subcellularLocation>
    <subcellularLocation>
        <location evidence="2">Cell projection</location>
        <location evidence="2">Growth cone</location>
    </subcellularLocation>
    <subcellularLocation>
        <location evidence="2">Cell projection</location>
        <location evidence="2">Neuron projection</location>
    </subcellularLocation>
    <subcellularLocation>
        <location evidence="2">Cytoplasmic vesicle</location>
        <location evidence="2">Secretory vesicle</location>
        <location evidence="2">Synaptic vesicle</location>
    </subcellularLocation>
    <text evidence="2">Localizes to large nonmembrane-bound cytoplasmic bodies found in various types of neurons, called stigmoid bodies (STBs). Localization to neuronal processes and neurite tips is decreased by YWHAZ. In the nucleus localizes to nuclear rods.</text>
</comment>
<comment type="alternative products">
    <event type="alternative splicing"/>
    <isoform>
        <id>P54257-1</id>
        <name>1</name>
        <sequence type="displayed"/>
    </isoform>
    <isoform>
        <id>P54257-2</id>
        <name>2</name>
        <sequence type="described" ref="VSP_004278"/>
    </isoform>
    <isoform>
        <id>P54257-3</id>
        <name>3</name>
        <sequence type="described" ref="VSP_004277"/>
    </isoform>
    <isoform>
        <id>P54257-4</id>
        <name>4</name>
        <sequence type="described" ref="VSP_038754 VSP_004277"/>
    </isoform>
    <text>Additional isoforms seem to exist.</text>
</comment>
<comment type="tissue specificity">
    <text>Predominantly expressed in brain. Selectively expressed in neurons.</text>
</comment>
<comment type="miscellaneous">
    <text>Was not found in huntingtin-containing aggregates in huntigton disease (HD) tissue.</text>
</comment>
<dbReference type="EMBL" id="AF040723">
    <property type="protein sequence ID" value="AAC39861.1"/>
    <property type="molecule type" value="mRNA"/>
</dbReference>
<dbReference type="EMBL" id="AJ012824">
    <property type="protein sequence ID" value="CAC09418.1"/>
    <property type="molecule type" value="Genomic_DNA"/>
</dbReference>
<dbReference type="EMBL" id="AK022007">
    <property type="protein sequence ID" value="BAB13952.1"/>
    <property type="molecule type" value="mRNA"/>
</dbReference>
<dbReference type="EMBL" id="AC109319">
    <property type="status" value="NOT_ANNOTATED_CDS"/>
    <property type="molecule type" value="Genomic_DNA"/>
</dbReference>
<dbReference type="EMBL" id="AB209105">
    <property type="protein sequence ID" value="BAD92342.1"/>
    <property type="molecule type" value="mRNA"/>
</dbReference>
<dbReference type="EMBL" id="AJ224877">
    <property type="protein sequence ID" value="CAB82785.1"/>
    <property type="molecule type" value="Genomic_DNA"/>
</dbReference>
<dbReference type="EMBL" id="U38371">
    <property type="protein sequence ID" value="AAC50297.1"/>
    <property type="molecule type" value="mRNA"/>
</dbReference>
<dbReference type="CCDS" id="CCDS11406.1">
    <molecule id="P54257-2"/>
</dbReference>
<dbReference type="CCDS" id="CCDS42338.1">
    <molecule id="P54257-4"/>
</dbReference>
<dbReference type="CCDS" id="CCDS42339.1">
    <molecule id="P54257-3"/>
</dbReference>
<dbReference type="PIR" id="S72555">
    <property type="entry name" value="S72555"/>
</dbReference>
<dbReference type="RefSeq" id="NP_001073339.1">
    <molecule id="P54257-4"/>
    <property type="nucleotide sequence ID" value="NM_001079870.1"/>
</dbReference>
<dbReference type="RefSeq" id="NP_001073340.1">
    <molecule id="P54257-3"/>
    <property type="nucleotide sequence ID" value="NM_001079871.1"/>
</dbReference>
<dbReference type="RefSeq" id="NP_817084.2">
    <molecule id="P54257-2"/>
    <property type="nucleotide sequence ID" value="NM_177977.3"/>
</dbReference>
<dbReference type="SMR" id="P54257"/>
<dbReference type="BioGRID" id="114480">
    <property type="interactions" value="145"/>
</dbReference>
<dbReference type="CORUM" id="P54257"/>
<dbReference type="FunCoup" id="P54257">
    <property type="interactions" value="140"/>
</dbReference>
<dbReference type="IntAct" id="P54257">
    <property type="interactions" value="86"/>
</dbReference>
<dbReference type="MINT" id="P54257"/>
<dbReference type="STRING" id="9606.ENSP00000334002"/>
<dbReference type="iPTMnet" id="P54257"/>
<dbReference type="PhosphoSitePlus" id="P54257"/>
<dbReference type="BioMuta" id="HAP1"/>
<dbReference type="DMDM" id="290457683"/>
<dbReference type="MassIVE" id="P54257"/>
<dbReference type="PaxDb" id="9606-ENSP00000334002"/>
<dbReference type="PeptideAtlas" id="P54257"/>
<dbReference type="Antibodypedia" id="80380">
    <property type="antibodies" value="246 antibodies from 34 providers"/>
</dbReference>
<dbReference type="DNASU" id="9001"/>
<dbReference type="Ensembl" id="ENST00000310778.5">
    <molecule id="P54257-1"/>
    <property type="protein sequence ID" value="ENSP00000309392.5"/>
    <property type="gene ID" value="ENSG00000173805.16"/>
</dbReference>
<dbReference type="Ensembl" id="ENST00000341193.9">
    <molecule id="P54257-4"/>
    <property type="protein sequence ID" value="ENSP00000343170.5"/>
    <property type="gene ID" value="ENSG00000173805.16"/>
</dbReference>
<dbReference type="Ensembl" id="ENST00000347901.9">
    <molecule id="P54257-2"/>
    <property type="protein sequence ID" value="ENSP00000334002.4"/>
    <property type="gene ID" value="ENSG00000173805.16"/>
</dbReference>
<dbReference type="Ensembl" id="ENST00000393939.6">
    <molecule id="P54257-3"/>
    <property type="protein sequence ID" value="ENSP00000377513.2"/>
    <property type="gene ID" value="ENSG00000173805.16"/>
</dbReference>
<dbReference type="GeneID" id="9001"/>
<dbReference type="KEGG" id="hsa:9001"/>
<dbReference type="MANE-Select" id="ENST00000347901.9">
    <molecule id="P54257-2"/>
    <property type="protein sequence ID" value="ENSP00000334002.4"/>
    <property type="RefSeq nucleotide sequence ID" value="NM_177977.3"/>
    <property type="RefSeq protein sequence ID" value="NP_817084.2"/>
</dbReference>
<dbReference type="UCSC" id="uc002hxm.2">
    <molecule id="P54257-1"/>
    <property type="organism name" value="human"/>
</dbReference>
<dbReference type="AGR" id="HGNC:4812"/>
<dbReference type="CTD" id="9001"/>
<dbReference type="DisGeNET" id="9001"/>
<dbReference type="GeneCards" id="HAP1"/>
<dbReference type="HGNC" id="HGNC:4812">
    <property type="gene designation" value="HAP1"/>
</dbReference>
<dbReference type="HPA" id="ENSG00000173805">
    <property type="expression patterns" value="Tissue enhanced (brain)"/>
</dbReference>
<dbReference type="MalaCards" id="HAP1"/>
<dbReference type="MIM" id="600947">
    <property type="type" value="gene"/>
</dbReference>
<dbReference type="neXtProt" id="NX_P54257"/>
<dbReference type="OpenTargets" id="ENSG00000173805"/>
<dbReference type="PharmGKB" id="PA29188"/>
<dbReference type="VEuPathDB" id="HostDB:ENSG00000173805"/>
<dbReference type="eggNOG" id="KOG4360">
    <property type="taxonomic scope" value="Eukaryota"/>
</dbReference>
<dbReference type="GeneTree" id="ENSGT00940000162183"/>
<dbReference type="HOGENOM" id="CLU_036493_0_0_1"/>
<dbReference type="InParanoid" id="P54257"/>
<dbReference type="OMA" id="RNYEVTP"/>
<dbReference type="OrthoDB" id="10067624at2759"/>
<dbReference type="PAN-GO" id="P54257">
    <property type="GO annotations" value="11 GO annotations based on evolutionary models"/>
</dbReference>
<dbReference type="PhylomeDB" id="P54257"/>
<dbReference type="TreeFam" id="TF323495"/>
<dbReference type="PathwayCommons" id="P54257"/>
<dbReference type="SignaLink" id="P54257"/>
<dbReference type="SIGNOR" id="P54257"/>
<dbReference type="BioGRID-ORCS" id="9001">
    <property type="hits" value="50 hits in 1141 CRISPR screens"/>
</dbReference>
<dbReference type="CD-CODE" id="8C2F96ED">
    <property type="entry name" value="Centrosome"/>
</dbReference>
<dbReference type="ChiTaRS" id="HAP1">
    <property type="organism name" value="human"/>
</dbReference>
<dbReference type="GenomeRNAi" id="9001"/>
<dbReference type="Pharos" id="P54257">
    <property type="development level" value="Tbio"/>
</dbReference>
<dbReference type="PRO" id="PR:P54257"/>
<dbReference type="Proteomes" id="UP000005640">
    <property type="component" value="Chromosome 17"/>
</dbReference>
<dbReference type="RNAct" id="P54257">
    <property type="molecule type" value="protein"/>
</dbReference>
<dbReference type="Bgee" id="ENSG00000173805">
    <property type="expression patterns" value="Expressed in hypothalamus and 137 other cell types or tissues"/>
</dbReference>
<dbReference type="ExpressionAtlas" id="P54257">
    <property type="expression patterns" value="baseline and differential"/>
</dbReference>
<dbReference type="GO" id="GO:0015629">
    <property type="term" value="C:actin cytoskeleton"/>
    <property type="evidence" value="ECO:0000304"/>
    <property type="project" value="ProtInc"/>
</dbReference>
<dbReference type="GO" id="GO:0005776">
    <property type="term" value="C:autophagosome"/>
    <property type="evidence" value="ECO:0007669"/>
    <property type="project" value="UniProtKB-SubCell"/>
</dbReference>
<dbReference type="GO" id="GO:1904115">
    <property type="term" value="C:axon cytoplasm"/>
    <property type="evidence" value="ECO:0007669"/>
    <property type="project" value="GOC"/>
</dbReference>
<dbReference type="GO" id="GO:0005814">
    <property type="term" value="C:centriole"/>
    <property type="evidence" value="ECO:0007669"/>
    <property type="project" value="Ensembl"/>
</dbReference>
<dbReference type="GO" id="GO:0005813">
    <property type="term" value="C:centrosome"/>
    <property type="evidence" value="ECO:0007669"/>
    <property type="project" value="Ensembl"/>
</dbReference>
<dbReference type="GO" id="GO:0031410">
    <property type="term" value="C:cytoplasmic vesicle"/>
    <property type="evidence" value="ECO:0000318"/>
    <property type="project" value="GO_Central"/>
</dbReference>
<dbReference type="GO" id="GO:0005856">
    <property type="term" value="C:cytoskeleton"/>
    <property type="evidence" value="ECO:0000304"/>
    <property type="project" value="ProtInc"/>
</dbReference>
<dbReference type="GO" id="GO:0005829">
    <property type="term" value="C:cytosol"/>
    <property type="evidence" value="ECO:0000314"/>
    <property type="project" value="HPA"/>
</dbReference>
<dbReference type="GO" id="GO:0030425">
    <property type="term" value="C:dendrite"/>
    <property type="evidence" value="ECO:0000318"/>
    <property type="project" value="GO_Central"/>
</dbReference>
<dbReference type="GO" id="GO:0043197">
    <property type="term" value="C:dendritic spine"/>
    <property type="evidence" value="ECO:0007669"/>
    <property type="project" value="UniProtKB-SubCell"/>
</dbReference>
<dbReference type="GO" id="GO:0005769">
    <property type="term" value="C:early endosome"/>
    <property type="evidence" value="ECO:0007669"/>
    <property type="project" value="UniProtKB-SubCell"/>
</dbReference>
<dbReference type="GO" id="GO:0005783">
    <property type="term" value="C:endoplasmic reticulum"/>
    <property type="evidence" value="ECO:0007669"/>
    <property type="project" value="UniProtKB-SubCell"/>
</dbReference>
<dbReference type="GO" id="GO:0030426">
    <property type="term" value="C:growth cone"/>
    <property type="evidence" value="ECO:0007669"/>
    <property type="project" value="UniProtKB-SubCell"/>
</dbReference>
<dbReference type="GO" id="GO:0016234">
    <property type="term" value="C:inclusion body"/>
    <property type="evidence" value="ECO:0000314"/>
    <property type="project" value="UniProtKB"/>
</dbReference>
<dbReference type="GO" id="GO:0005764">
    <property type="term" value="C:lysosome"/>
    <property type="evidence" value="ECO:0007669"/>
    <property type="project" value="UniProtKB-SubCell"/>
</dbReference>
<dbReference type="GO" id="GO:0005739">
    <property type="term" value="C:mitochondrion"/>
    <property type="evidence" value="ECO:0000318"/>
    <property type="project" value="GO_Central"/>
</dbReference>
<dbReference type="GO" id="GO:0005730">
    <property type="term" value="C:nucleolus"/>
    <property type="evidence" value="ECO:0000314"/>
    <property type="project" value="HPA"/>
</dbReference>
<dbReference type="GO" id="GO:0008021">
    <property type="term" value="C:synaptic vesicle"/>
    <property type="evidence" value="ECO:0007669"/>
    <property type="project" value="UniProtKB-SubCell"/>
</dbReference>
<dbReference type="GO" id="GO:0048403">
    <property type="term" value="F:brain-derived neurotrophic factor binding"/>
    <property type="evidence" value="ECO:0000250"/>
    <property type="project" value="UniProtKB"/>
</dbReference>
<dbReference type="GO" id="GO:0017022">
    <property type="term" value="F:myosin binding"/>
    <property type="evidence" value="ECO:0000318"/>
    <property type="project" value="GO_Central"/>
</dbReference>
<dbReference type="GO" id="GO:0005102">
    <property type="term" value="F:signaling receptor binding"/>
    <property type="evidence" value="ECO:0000318"/>
    <property type="project" value="GO_Central"/>
</dbReference>
<dbReference type="GO" id="GO:0044325">
    <property type="term" value="F:transmembrane transporter binding"/>
    <property type="evidence" value="ECO:0000250"/>
    <property type="project" value="UniProtKB"/>
</dbReference>
<dbReference type="GO" id="GO:0008089">
    <property type="term" value="P:anterograde axonal transport"/>
    <property type="evidence" value="ECO:0000250"/>
    <property type="project" value="UniProtKB"/>
</dbReference>
<dbReference type="GO" id="GO:0006914">
    <property type="term" value="P:autophagy"/>
    <property type="evidence" value="ECO:0007669"/>
    <property type="project" value="UniProtKB-KW"/>
</dbReference>
<dbReference type="GO" id="GO:0007420">
    <property type="term" value="P:brain development"/>
    <property type="evidence" value="ECO:0000303"/>
    <property type="project" value="UniProtKB"/>
</dbReference>
<dbReference type="GO" id="GO:0030030">
    <property type="term" value="P:cell projection organization"/>
    <property type="evidence" value="ECO:0007669"/>
    <property type="project" value="UniProtKB-KW"/>
</dbReference>
<dbReference type="GO" id="GO:0021549">
    <property type="term" value="P:cerebellum development"/>
    <property type="evidence" value="ECO:0007669"/>
    <property type="project" value="Ensembl"/>
</dbReference>
<dbReference type="GO" id="GO:0007268">
    <property type="term" value="P:chemical synaptic transmission"/>
    <property type="evidence" value="ECO:0000304"/>
    <property type="project" value="ProtInc"/>
</dbReference>
<dbReference type="GO" id="GO:0006887">
    <property type="term" value="P:exocytosis"/>
    <property type="evidence" value="ECO:0007669"/>
    <property type="project" value="UniProtKB-KW"/>
</dbReference>
<dbReference type="GO" id="GO:0021979">
    <property type="term" value="P:hypothalamus cell differentiation"/>
    <property type="evidence" value="ECO:0007669"/>
    <property type="project" value="Ensembl"/>
</dbReference>
<dbReference type="GO" id="GO:0048311">
    <property type="term" value="P:mitochondrion distribution"/>
    <property type="evidence" value="ECO:0000318"/>
    <property type="project" value="GO_Central"/>
</dbReference>
<dbReference type="GO" id="GO:1902430">
    <property type="term" value="P:negative regulation of amyloid-beta formation"/>
    <property type="evidence" value="ECO:0000250"/>
    <property type="project" value="UniProtKB"/>
</dbReference>
<dbReference type="GO" id="GO:0022008">
    <property type="term" value="P:neurogenesis"/>
    <property type="evidence" value="ECO:0000318"/>
    <property type="project" value="GO_Central"/>
</dbReference>
<dbReference type="GO" id="GO:0048011">
    <property type="term" value="P:neurotrophin TRK receptor signaling pathway"/>
    <property type="evidence" value="ECO:0000250"/>
    <property type="project" value="UniProtKB"/>
</dbReference>
<dbReference type="GO" id="GO:0045742">
    <property type="term" value="P:positive regulation of epidermal growth factor receptor signaling pathway"/>
    <property type="evidence" value="ECO:0000250"/>
    <property type="project" value="UniProtKB"/>
</dbReference>
<dbReference type="GO" id="GO:0031587">
    <property type="term" value="P:positive regulation of inositol 1,4,5-trisphosphate-sensitive calcium-release channel activity"/>
    <property type="evidence" value="ECO:0000250"/>
    <property type="project" value="UniProtKB"/>
</dbReference>
<dbReference type="GO" id="GO:0050769">
    <property type="term" value="P:positive regulation of neurogenesis"/>
    <property type="evidence" value="ECO:0007669"/>
    <property type="project" value="Ensembl"/>
</dbReference>
<dbReference type="GO" id="GO:0032901">
    <property type="term" value="P:positive regulation of neurotrophin production"/>
    <property type="evidence" value="ECO:0000250"/>
    <property type="project" value="UniProtKB"/>
</dbReference>
<dbReference type="GO" id="GO:1902857">
    <property type="term" value="P:positive regulation of non-motile cilium assembly"/>
    <property type="evidence" value="ECO:0000250"/>
    <property type="project" value="UniProtKB"/>
</dbReference>
<dbReference type="GO" id="GO:0032230">
    <property type="term" value="P:positive regulation of synaptic transmission, GABAergic"/>
    <property type="evidence" value="ECO:0000250"/>
    <property type="project" value="UniProtKB"/>
</dbReference>
<dbReference type="GO" id="GO:0008104">
    <property type="term" value="P:protein localization"/>
    <property type="evidence" value="ECO:0000315"/>
    <property type="project" value="UniProtKB"/>
</dbReference>
<dbReference type="GO" id="GO:0006605">
    <property type="term" value="P:protein targeting"/>
    <property type="evidence" value="ECO:0000318"/>
    <property type="project" value="GO_Central"/>
</dbReference>
<dbReference type="GO" id="GO:0015031">
    <property type="term" value="P:protein transport"/>
    <property type="evidence" value="ECO:0007669"/>
    <property type="project" value="UniProtKB-KW"/>
</dbReference>
<dbReference type="GO" id="GO:0017157">
    <property type="term" value="P:regulation of exocytosis"/>
    <property type="evidence" value="ECO:0000250"/>
    <property type="project" value="UniProtKB"/>
</dbReference>
<dbReference type="GO" id="GO:1902513">
    <property type="term" value="P:regulation of organelle transport along microtubule"/>
    <property type="evidence" value="ECO:0000250"/>
    <property type="project" value="UniProtKB"/>
</dbReference>
<dbReference type="GO" id="GO:0008090">
    <property type="term" value="P:retrograde axonal transport"/>
    <property type="evidence" value="ECO:0000250"/>
    <property type="project" value="UniProtKB"/>
</dbReference>
<dbReference type="GO" id="GO:0047496">
    <property type="term" value="P:vesicle transport along microtubule"/>
    <property type="evidence" value="ECO:0000318"/>
    <property type="project" value="GO_Central"/>
</dbReference>
<dbReference type="InterPro" id="IPR006933">
    <property type="entry name" value="HAP1_N"/>
</dbReference>
<dbReference type="InterPro" id="IPR051946">
    <property type="entry name" value="Intracell_Traff-Reg"/>
</dbReference>
<dbReference type="PANTHER" id="PTHR15751:SF14">
    <property type="entry name" value="HUNTINGTIN-ASSOCIATED PROTEIN 1"/>
    <property type="match status" value="1"/>
</dbReference>
<dbReference type="PANTHER" id="PTHR15751">
    <property type="entry name" value="TRAFFICKING KINESIN-BINDING PROTEIN"/>
    <property type="match status" value="1"/>
</dbReference>
<dbReference type="Pfam" id="PF04849">
    <property type="entry name" value="HAP1_N"/>
    <property type="match status" value="1"/>
</dbReference>
<dbReference type="SMART" id="SM01424">
    <property type="entry name" value="HAP1_N"/>
    <property type="match status" value="1"/>
</dbReference>